<comment type="function">
    <text evidence="2 5">Protease that acts as a positive regulator of the cGAS-STING pathway by catalyzing desumoylation of CGAS (PubMed:28095500). Desumoylation of CGAS promotes DNA-binding activity of CGAS, subsequent oligomerization and activation (PubMed:28095500). Deconjugates SUMO2 and SUMO3 from targeted proteins, but not SUMO1 (By similarity). Catalyzes the deconjugation of poly-SUMO2 and poly-SUMO3 chains (By similarity). Has very low efficiency in processing full-length SUMO proteins to their mature forms (By similarity).</text>
</comment>
<comment type="interaction">
    <interactant intactId="EBI-15972382">
        <id>Q8BUH8</id>
    </interactant>
    <interactant intactId="EBI-307973">
        <id>Q61686</id>
        <label>Cbx5</label>
    </interactant>
    <organismsDiffer>false</organismsDiffer>
    <experiments>4</experiments>
</comment>
<comment type="subcellular location">
    <subcellularLocation>
        <location evidence="5">Cytoplasm</location>
    </subcellularLocation>
</comment>
<comment type="similarity">
    <text evidence="8">Belongs to the peptidase C48 family.</text>
</comment>
<comment type="sequence caution" evidence="8">
    <conflict type="erroneous initiation">
        <sequence resource="EMBL-CDS" id="BAC65824"/>
    </conflict>
</comment>
<keyword id="KW-0963">Cytoplasm</keyword>
<keyword id="KW-0378">Hydrolase</keyword>
<keyword id="KW-0391">Immunity</keyword>
<keyword id="KW-0399">Innate immunity</keyword>
<keyword id="KW-0597">Phosphoprotein</keyword>
<keyword id="KW-0645">Protease</keyword>
<keyword id="KW-1185">Reference proteome</keyword>
<keyword id="KW-0788">Thiol protease</keyword>
<keyword id="KW-0833">Ubl conjugation pathway</keyword>
<name>SENP7_MOUSE</name>
<proteinExistence type="evidence at protein level"/>
<reference key="1">
    <citation type="journal article" date="2003" name="DNA Res.">
        <title>Prediction of the coding sequences of mouse homologues of KIAA gene: II. The complete nucleotide sequences of 400 mouse KIAA-homologous cDNAs identified by screening of terminal sequences of cDNA clones randomly sampled from size-fractionated libraries.</title>
        <authorList>
            <person name="Okazaki N."/>
            <person name="Kikuno R."/>
            <person name="Ohara R."/>
            <person name="Inamoto S."/>
            <person name="Aizawa H."/>
            <person name="Yuasa S."/>
            <person name="Nakajima D."/>
            <person name="Nagase T."/>
            <person name="Ohara O."/>
            <person name="Koga H."/>
        </authorList>
    </citation>
    <scope>NUCLEOTIDE SEQUENCE [LARGE SCALE MRNA]</scope>
    <source>
        <tissue>Brain</tissue>
    </source>
</reference>
<reference key="2">
    <citation type="journal article" date="2005" name="Science">
        <title>The transcriptional landscape of the mammalian genome.</title>
        <authorList>
            <person name="Carninci P."/>
            <person name="Kasukawa T."/>
            <person name="Katayama S."/>
            <person name="Gough J."/>
            <person name="Frith M.C."/>
            <person name="Maeda N."/>
            <person name="Oyama R."/>
            <person name="Ravasi T."/>
            <person name="Lenhard B."/>
            <person name="Wells C."/>
            <person name="Kodzius R."/>
            <person name="Shimokawa K."/>
            <person name="Bajic V.B."/>
            <person name="Brenner S.E."/>
            <person name="Batalov S."/>
            <person name="Forrest A.R."/>
            <person name="Zavolan M."/>
            <person name="Davis M.J."/>
            <person name="Wilming L.G."/>
            <person name="Aidinis V."/>
            <person name="Allen J.E."/>
            <person name="Ambesi-Impiombato A."/>
            <person name="Apweiler R."/>
            <person name="Aturaliya R.N."/>
            <person name="Bailey T.L."/>
            <person name="Bansal M."/>
            <person name="Baxter L."/>
            <person name="Beisel K.W."/>
            <person name="Bersano T."/>
            <person name="Bono H."/>
            <person name="Chalk A.M."/>
            <person name="Chiu K.P."/>
            <person name="Choudhary V."/>
            <person name="Christoffels A."/>
            <person name="Clutterbuck D.R."/>
            <person name="Crowe M.L."/>
            <person name="Dalla E."/>
            <person name="Dalrymple B.P."/>
            <person name="de Bono B."/>
            <person name="Della Gatta G."/>
            <person name="di Bernardo D."/>
            <person name="Down T."/>
            <person name="Engstrom P."/>
            <person name="Fagiolini M."/>
            <person name="Faulkner G."/>
            <person name="Fletcher C.F."/>
            <person name="Fukushima T."/>
            <person name="Furuno M."/>
            <person name="Futaki S."/>
            <person name="Gariboldi M."/>
            <person name="Georgii-Hemming P."/>
            <person name="Gingeras T.R."/>
            <person name="Gojobori T."/>
            <person name="Green R.E."/>
            <person name="Gustincich S."/>
            <person name="Harbers M."/>
            <person name="Hayashi Y."/>
            <person name="Hensch T.K."/>
            <person name="Hirokawa N."/>
            <person name="Hill D."/>
            <person name="Huminiecki L."/>
            <person name="Iacono M."/>
            <person name="Ikeo K."/>
            <person name="Iwama A."/>
            <person name="Ishikawa T."/>
            <person name="Jakt M."/>
            <person name="Kanapin A."/>
            <person name="Katoh M."/>
            <person name="Kawasawa Y."/>
            <person name="Kelso J."/>
            <person name="Kitamura H."/>
            <person name="Kitano H."/>
            <person name="Kollias G."/>
            <person name="Krishnan S.P."/>
            <person name="Kruger A."/>
            <person name="Kummerfeld S.K."/>
            <person name="Kurochkin I.V."/>
            <person name="Lareau L.F."/>
            <person name="Lazarevic D."/>
            <person name="Lipovich L."/>
            <person name="Liu J."/>
            <person name="Liuni S."/>
            <person name="McWilliam S."/>
            <person name="Madan Babu M."/>
            <person name="Madera M."/>
            <person name="Marchionni L."/>
            <person name="Matsuda H."/>
            <person name="Matsuzawa S."/>
            <person name="Miki H."/>
            <person name="Mignone F."/>
            <person name="Miyake S."/>
            <person name="Morris K."/>
            <person name="Mottagui-Tabar S."/>
            <person name="Mulder N."/>
            <person name="Nakano N."/>
            <person name="Nakauchi H."/>
            <person name="Ng P."/>
            <person name="Nilsson R."/>
            <person name="Nishiguchi S."/>
            <person name="Nishikawa S."/>
            <person name="Nori F."/>
            <person name="Ohara O."/>
            <person name="Okazaki Y."/>
            <person name="Orlando V."/>
            <person name="Pang K.C."/>
            <person name="Pavan W.J."/>
            <person name="Pavesi G."/>
            <person name="Pesole G."/>
            <person name="Petrovsky N."/>
            <person name="Piazza S."/>
            <person name="Reed J."/>
            <person name="Reid J.F."/>
            <person name="Ring B.Z."/>
            <person name="Ringwald M."/>
            <person name="Rost B."/>
            <person name="Ruan Y."/>
            <person name="Salzberg S.L."/>
            <person name="Sandelin A."/>
            <person name="Schneider C."/>
            <person name="Schoenbach C."/>
            <person name="Sekiguchi K."/>
            <person name="Semple C.A."/>
            <person name="Seno S."/>
            <person name="Sessa L."/>
            <person name="Sheng Y."/>
            <person name="Shibata Y."/>
            <person name="Shimada H."/>
            <person name="Shimada K."/>
            <person name="Silva D."/>
            <person name="Sinclair B."/>
            <person name="Sperling S."/>
            <person name="Stupka E."/>
            <person name="Sugiura K."/>
            <person name="Sultana R."/>
            <person name="Takenaka Y."/>
            <person name="Taki K."/>
            <person name="Tammoja K."/>
            <person name="Tan S.L."/>
            <person name="Tang S."/>
            <person name="Taylor M.S."/>
            <person name="Tegner J."/>
            <person name="Teichmann S.A."/>
            <person name="Ueda H.R."/>
            <person name="van Nimwegen E."/>
            <person name="Verardo R."/>
            <person name="Wei C.L."/>
            <person name="Yagi K."/>
            <person name="Yamanishi H."/>
            <person name="Zabarovsky E."/>
            <person name="Zhu S."/>
            <person name="Zimmer A."/>
            <person name="Hide W."/>
            <person name="Bult C."/>
            <person name="Grimmond S.M."/>
            <person name="Teasdale R.D."/>
            <person name="Liu E.T."/>
            <person name="Brusic V."/>
            <person name="Quackenbush J."/>
            <person name="Wahlestedt C."/>
            <person name="Mattick J.S."/>
            <person name="Hume D.A."/>
            <person name="Kai C."/>
            <person name="Sasaki D."/>
            <person name="Tomaru Y."/>
            <person name="Fukuda S."/>
            <person name="Kanamori-Katayama M."/>
            <person name="Suzuki M."/>
            <person name="Aoki J."/>
            <person name="Arakawa T."/>
            <person name="Iida J."/>
            <person name="Imamura K."/>
            <person name="Itoh M."/>
            <person name="Kato T."/>
            <person name="Kawaji H."/>
            <person name="Kawagashira N."/>
            <person name="Kawashima T."/>
            <person name="Kojima M."/>
            <person name="Kondo S."/>
            <person name="Konno H."/>
            <person name="Nakano K."/>
            <person name="Ninomiya N."/>
            <person name="Nishio T."/>
            <person name="Okada M."/>
            <person name="Plessy C."/>
            <person name="Shibata K."/>
            <person name="Shiraki T."/>
            <person name="Suzuki S."/>
            <person name="Tagami M."/>
            <person name="Waki K."/>
            <person name="Watahiki A."/>
            <person name="Okamura-Oho Y."/>
            <person name="Suzuki H."/>
            <person name="Kawai J."/>
            <person name="Hayashizaki Y."/>
        </authorList>
    </citation>
    <scope>NUCLEOTIDE SEQUENCE [LARGE SCALE MRNA]</scope>
    <source>
        <strain>C57BL/6J</strain>
        <tissue>Lung</tissue>
    </source>
</reference>
<reference key="3">
    <citation type="journal article" date="2004" name="Genome Res.">
        <title>The status, quality, and expansion of the NIH full-length cDNA project: the Mammalian Gene Collection (MGC).</title>
        <authorList>
            <consortium name="The MGC Project Team"/>
        </authorList>
    </citation>
    <scope>NUCLEOTIDE SEQUENCE [LARGE SCALE MRNA]</scope>
    <source>
        <strain>C57BL/6J</strain>
        <tissue>Eye</tissue>
    </source>
</reference>
<reference key="4">
    <citation type="journal article" date="2010" name="Cell">
        <title>A tissue-specific atlas of mouse protein phosphorylation and expression.</title>
        <authorList>
            <person name="Huttlin E.L."/>
            <person name="Jedrychowski M.P."/>
            <person name="Elias J.E."/>
            <person name="Goswami T."/>
            <person name="Rad R."/>
            <person name="Beausoleil S.A."/>
            <person name="Villen J."/>
            <person name="Haas W."/>
            <person name="Sowa M.E."/>
            <person name="Gygi S.P."/>
        </authorList>
    </citation>
    <scope>PHOSPHORYLATION [LARGE SCALE ANALYSIS] AT SER-12; SER-434 AND SER-435</scope>
    <scope>IDENTIFICATION BY MASS SPECTROMETRY [LARGE SCALE ANALYSIS]</scope>
    <source>
        <tissue>Brain</tissue>
        <tissue>Kidney</tissue>
        <tissue>Lung</tissue>
        <tissue>Pancreas</tissue>
        <tissue>Spleen</tissue>
        <tissue>Testis</tissue>
    </source>
</reference>
<reference key="5">
    <citation type="journal article" date="2017" name="PLoS Pathog.">
        <title>SENP7 potentiates cGAS activation by relieving SUMO-mediated inhibition of cytosolic DNA sensing.</title>
        <authorList>
            <person name="Cui Y."/>
            <person name="Yu H."/>
            <person name="Zheng X."/>
            <person name="Peng R."/>
            <person name="Wang Q."/>
            <person name="Zhou Y."/>
            <person name="Wang R."/>
            <person name="Wang J."/>
            <person name="Qu B."/>
            <person name="Shen N."/>
            <person name="Guo Q."/>
            <person name="Liu X."/>
            <person name="Wang C."/>
        </authorList>
    </citation>
    <scope>FUNCTION</scope>
    <scope>CATALYTIC ACTIVITY</scope>
    <scope>SUBCELLULAR LOCATION</scope>
    <scope>ACTIVE SITE</scope>
    <scope>MUTAGENESIS OF CYS-979</scope>
</reference>
<evidence type="ECO:0000250" key="1">
    <source>
        <dbReference type="UniProtKB" id="D3ZF42"/>
    </source>
</evidence>
<evidence type="ECO:0000250" key="2">
    <source>
        <dbReference type="UniProtKB" id="Q9BQF6"/>
    </source>
</evidence>
<evidence type="ECO:0000250" key="3">
    <source>
        <dbReference type="UniProtKB" id="Q9HC62"/>
    </source>
</evidence>
<evidence type="ECO:0000256" key="4">
    <source>
        <dbReference type="SAM" id="MobiDB-lite"/>
    </source>
</evidence>
<evidence type="ECO:0000269" key="5">
    <source>
    </source>
</evidence>
<evidence type="ECO:0000303" key="6">
    <source>
    </source>
</evidence>
<evidence type="ECO:0000303" key="7">
    <source>
    </source>
</evidence>
<evidence type="ECO:0000305" key="8"/>
<evidence type="ECO:0000305" key="9">
    <source>
    </source>
</evidence>
<evidence type="ECO:0000312" key="10">
    <source>
        <dbReference type="MGI" id="MGI:1913565"/>
    </source>
</evidence>
<evidence type="ECO:0007744" key="11">
    <source>
    </source>
</evidence>
<organism>
    <name type="scientific">Mus musculus</name>
    <name type="common">Mouse</name>
    <dbReference type="NCBI Taxonomy" id="10090"/>
    <lineage>
        <taxon>Eukaryota</taxon>
        <taxon>Metazoa</taxon>
        <taxon>Chordata</taxon>
        <taxon>Craniata</taxon>
        <taxon>Vertebrata</taxon>
        <taxon>Euteleostomi</taxon>
        <taxon>Mammalia</taxon>
        <taxon>Eutheria</taxon>
        <taxon>Euarchontoglires</taxon>
        <taxon>Glires</taxon>
        <taxon>Rodentia</taxon>
        <taxon>Myomorpha</taxon>
        <taxon>Muroidea</taxon>
        <taxon>Muridae</taxon>
        <taxon>Murinae</taxon>
        <taxon>Mus</taxon>
        <taxon>Mus</taxon>
    </lineage>
</organism>
<feature type="chain" id="PRO_0000267609" description="Sentrin-specific protease 7">
    <location>
        <begin position="1"/>
        <end position="1037"/>
    </location>
</feature>
<feature type="region of interest" description="Disordered" evidence="4">
    <location>
        <begin position="1"/>
        <end position="27"/>
    </location>
</feature>
<feature type="region of interest" description="Disordered" evidence="4">
    <location>
        <begin position="185"/>
        <end position="399"/>
    </location>
</feature>
<feature type="region of interest" description="Protease" evidence="3">
    <location>
        <begin position="747"/>
        <end position="1037"/>
    </location>
</feature>
<feature type="region of interest" description="Disordered" evidence="4">
    <location>
        <begin position="873"/>
        <end position="909"/>
    </location>
</feature>
<feature type="compositionally biased region" description="Basic residues" evidence="4">
    <location>
        <begin position="1"/>
        <end position="10"/>
    </location>
</feature>
<feature type="compositionally biased region" description="Low complexity" evidence="4">
    <location>
        <begin position="192"/>
        <end position="208"/>
    </location>
</feature>
<feature type="compositionally biased region" description="Polar residues" evidence="4">
    <location>
        <begin position="272"/>
        <end position="282"/>
    </location>
</feature>
<feature type="compositionally biased region" description="Basic residues" evidence="4">
    <location>
        <begin position="290"/>
        <end position="300"/>
    </location>
</feature>
<feature type="compositionally biased region" description="Basic and acidic residues" evidence="4">
    <location>
        <begin position="301"/>
        <end position="321"/>
    </location>
</feature>
<feature type="compositionally biased region" description="Basic and acidic residues" evidence="4">
    <location>
        <begin position="328"/>
        <end position="341"/>
    </location>
</feature>
<feature type="compositionally biased region" description="Low complexity" evidence="4">
    <location>
        <begin position="379"/>
        <end position="399"/>
    </location>
</feature>
<feature type="compositionally biased region" description="Basic and acidic residues" evidence="4">
    <location>
        <begin position="880"/>
        <end position="890"/>
    </location>
</feature>
<feature type="compositionally biased region" description="Polar residues" evidence="4">
    <location>
        <begin position="891"/>
        <end position="909"/>
    </location>
</feature>
<feature type="active site" evidence="3">
    <location>
        <position position="847"/>
    </location>
</feature>
<feature type="active site" evidence="3">
    <location>
        <position position="926"/>
    </location>
</feature>
<feature type="active site" description="Nucleophile" evidence="9">
    <location>
        <position position="979"/>
    </location>
</feature>
<feature type="modified residue" description="Phosphoserine" evidence="11">
    <location>
        <position position="12"/>
    </location>
</feature>
<feature type="modified residue" description="Phosphoserine" evidence="1">
    <location>
        <position position="13"/>
    </location>
</feature>
<feature type="modified residue" description="Phosphoserine" evidence="2">
    <location>
        <position position="25"/>
    </location>
</feature>
<feature type="modified residue" description="Phosphoserine" evidence="11">
    <location>
        <position position="434"/>
    </location>
</feature>
<feature type="modified residue" description="Phosphoserine" evidence="11">
    <location>
        <position position="435"/>
    </location>
</feature>
<feature type="mutagenesis site" description="Abolished protease activity and ability to desumoylate CGAS." evidence="5">
    <original>C</original>
    <variation>S</variation>
    <location>
        <position position="979"/>
    </location>
</feature>
<sequence>MDRARPGRRRASSEIVTEGKRKKSSPADLQKITKLLTVKSEDVLAQSPLSKLRGSECWWTRSLRNKVICLDHKKPKAARGCPPKGLPKRHLRVMLTNVLWTDLGREFRKTLPRKDANLCAPSKVQSDSLPSTSVDSIETCQRLDPLHQSLNLSERTPRVILTDIRQTELGRKYLKIPPVTEASLSDTANLKSEQLSSSSDGSLESCQSVNHHKSFLSESGPKPSRTGDVPAKEAACGGQKQGDDGGVTPEMAAPHPKDFNTGNKGCDYLEEGTSNKNTSYSYSEMDHTPVSRKRKKRGRSNFHDSHNSKTSLDKPTEHTKEEENDSSVSRKLEESGEDSHQDPAPPEGLAPESLESEATNLRSFAAGQEPDASAASGRASSPNKSLESSASSEVSENSSVAVKGEALTLKEASPPGGSSEESQLLISAEPIVVSSDEEGPVEHKNSVILKLQPPHEIMSENQGTSDPQLSELTLGACESVQVTSELFPYNPDVENISCIKSNSEMDLKLDFIFTCVYIGKIKGTPKGCVTFTKKYIKIPFQVSTNEISLTVDTARLKRFGLWESKDEDHSKRSHAILFLWLSSDYLQDIQTQLENPMLSQQSKANEFIFLELNSSISQREELKLKDIMMEISTKNGNLHLSCPLPWVQALPLFQDLSPQEISFLHYYYASASALPTAAGADMKKKSVSQPSNSDTIKPTYTFLHKQSSGCYSLSITSSPEEEWQEVRNTGPVQKLIVYPPPPTKGGLGVTNEDLECLEEGEFLNDVIIDFYLKYLLLEKASDELVERSHIFSSFFYKCLTRKENNLTEDNPDLSVAQRRHRRVRTWTRHINIFNKDYIFVPVNESSHWYLAVICFPWLEEAVYEDCPQTVSQQFQGQQSQHDHKMTDNDPHTTSTVSTSAEDSQSTEVNMSVPKKMCKRPCILILDSLKAASIQNTVQNLREYLEVEWEVKRKTHREFSKTNMVDLCPKVPKQDNSSDCGVYLLQYVESFFQDPIVNFELPIHLEKWFPRHVIKTKREDIRELILKLHLQQQKGGSC</sequence>
<dbReference type="EC" id="3.4.22.-" evidence="5"/>
<dbReference type="EMBL" id="AK122542">
    <property type="protein sequence ID" value="BAC65824.1"/>
    <property type="status" value="ALT_INIT"/>
    <property type="molecule type" value="mRNA"/>
</dbReference>
<dbReference type="EMBL" id="AK085060">
    <property type="protein sequence ID" value="BAC39352.1"/>
    <property type="molecule type" value="mRNA"/>
</dbReference>
<dbReference type="EMBL" id="BC058593">
    <property type="protein sequence ID" value="AAH58593.1"/>
    <property type="molecule type" value="mRNA"/>
</dbReference>
<dbReference type="CCDS" id="CCDS28222.1"/>
<dbReference type="RefSeq" id="NP_079759.2">
    <property type="nucleotide sequence ID" value="NM_025483.4"/>
</dbReference>
<dbReference type="RefSeq" id="XP_011244296.1">
    <property type="nucleotide sequence ID" value="XM_011245994.2"/>
</dbReference>
<dbReference type="RefSeq" id="XP_036015979.1">
    <property type="nucleotide sequence ID" value="XM_036160086.1"/>
</dbReference>
<dbReference type="SMR" id="Q8BUH8"/>
<dbReference type="BioGRID" id="211378">
    <property type="interactions" value="9"/>
</dbReference>
<dbReference type="DIP" id="DIP-60609N"/>
<dbReference type="FunCoup" id="Q8BUH8">
    <property type="interactions" value="4611"/>
</dbReference>
<dbReference type="IntAct" id="Q8BUH8">
    <property type="interactions" value="3"/>
</dbReference>
<dbReference type="STRING" id="10090.ENSMUSP00000086779"/>
<dbReference type="MEROPS" id="C48.009"/>
<dbReference type="GlyGen" id="Q8BUH8">
    <property type="glycosylation" value="2 sites, 1 N-linked glycan (1 site), 1 O-linked glycan (1 site)"/>
</dbReference>
<dbReference type="iPTMnet" id="Q8BUH8"/>
<dbReference type="PhosphoSitePlus" id="Q8BUH8"/>
<dbReference type="jPOST" id="Q8BUH8"/>
<dbReference type="PaxDb" id="10090-ENSMUSP00000086779"/>
<dbReference type="PeptideAtlas" id="Q8BUH8"/>
<dbReference type="ProteomicsDB" id="256547"/>
<dbReference type="Pumba" id="Q8BUH8"/>
<dbReference type="Antibodypedia" id="15887">
    <property type="antibodies" value="234 antibodies from 29 providers"/>
</dbReference>
<dbReference type="DNASU" id="66315"/>
<dbReference type="Ensembl" id="ENSMUST00000089362.9">
    <property type="protein sequence ID" value="ENSMUSP00000086779.3"/>
    <property type="gene ID" value="ENSMUSG00000052917.16"/>
</dbReference>
<dbReference type="GeneID" id="66315"/>
<dbReference type="KEGG" id="mmu:66315"/>
<dbReference type="UCSC" id="uc007zmi.2">
    <property type="organism name" value="mouse"/>
</dbReference>
<dbReference type="AGR" id="MGI:1913565"/>
<dbReference type="CTD" id="57337"/>
<dbReference type="MGI" id="MGI:1913565">
    <property type="gene designation" value="Senp7"/>
</dbReference>
<dbReference type="VEuPathDB" id="HostDB:ENSMUSG00000052917"/>
<dbReference type="eggNOG" id="KOG0779">
    <property type="taxonomic scope" value="Eukaryota"/>
</dbReference>
<dbReference type="GeneTree" id="ENSGT00940000157308"/>
<dbReference type="InParanoid" id="Q8BUH8"/>
<dbReference type="OMA" id="EFIFLEI"/>
<dbReference type="OrthoDB" id="442460at2759"/>
<dbReference type="PhylomeDB" id="Q8BUH8"/>
<dbReference type="TreeFam" id="TF350136"/>
<dbReference type="BRENDA" id="3.4.22.B75">
    <property type="organism ID" value="3474"/>
</dbReference>
<dbReference type="BioGRID-ORCS" id="66315">
    <property type="hits" value="2 hits in 61 CRISPR screens"/>
</dbReference>
<dbReference type="ChiTaRS" id="Senp7">
    <property type="organism name" value="mouse"/>
</dbReference>
<dbReference type="PRO" id="PR:Q8BUH8"/>
<dbReference type="Proteomes" id="UP000000589">
    <property type="component" value="Chromosome 16"/>
</dbReference>
<dbReference type="RNAct" id="Q8BUH8">
    <property type="molecule type" value="protein"/>
</dbReference>
<dbReference type="Bgee" id="ENSMUSG00000052917">
    <property type="expression patterns" value="Expressed in rostral migratory stream and 221 other cell types or tissues"/>
</dbReference>
<dbReference type="ExpressionAtlas" id="Q8BUH8">
    <property type="expression patterns" value="baseline and differential"/>
</dbReference>
<dbReference type="GO" id="GO:0005737">
    <property type="term" value="C:cytoplasm"/>
    <property type="evidence" value="ECO:0000314"/>
    <property type="project" value="UniProtKB"/>
</dbReference>
<dbReference type="GO" id="GO:0005634">
    <property type="term" value="C:nucleus"/>
    <property type="evidence" value="ECO:0007669"/>
    <property type="project" value="Ensembl"/>
</dbReference>
<dbReference type="GO" id="GO:0099524">
    <property type="term" value="C:postsynaptic cytosol"/>
    <property type="evidence" value="ECO:0000314"/>
    <property type="project" value="SynGO"/>
</dbReference>
<dbReference type="GO" id="GO:0099523">
    <property type="term" value="C:presynaptic cytosol"/>
    <property type="evidence" value="ECO:0000314"/>
    <property type="project" value="SynGO"/>
</dbReference>
<dbReference type="GO" id="GO:0070139">
    <property type="term" value="F:SUMO-specific endopeptidase activity"/>
    <property type="evidence" value="ECO:0000314"/>
    <property type="project" value="UniProtKB"/>
</dbReference>
<dbReference type="GO" id="GO:0140374">
    <property type="term" value="P:antiviral innate immune response"/>
    <property type="evidence" value="ECO:0000314"/>
    <property type="project" value="UniProtKB"/>
</dbReference>
<dbReference type="GO" id="GO:0016926">
    <property type="term" value="P:protein desumoylation"/>
    <property type="evidence" value="ECO:0000314"/>
    <property type="project" value="UniProtKB"/>
</dbReference>
<dbReference type="GO" id="GO:0006508">
    <property type="term" value="P:proteolysis"/>
    <property type="evidence" value="ECO:0007669"/>
    <property type="project" value="UniProtKB-KW"/>
</dbReference>
<dbReference type="Gene3D" id="3.40.395.10">
    <property type="entry name" value="Adenoviral Proteinase, Chain A"/>
    <property type="match status" value="1"/>
</dbReference>
<dbReference type="InterPro" id="IPR038765">
    <property type="entry name" value="Papain-like_cys_pep_sf"/>
</dbReference>
<dbReference type="InterPro" id="IPR003653">
    <property type="entry name" value="Peptidase_C48_C"/>
</dbReference>
<dbReference type="InterPro" id="IPR051947">
    <property type="entry name" value="Sentrin-specific_protease"/>
</dbReference>
<dbReference type="PANTHER" id="PTHR46896">
    <property type="entry name" value="SENTRIN-SPECIFIC PROTEASE"/>
    <property type="match status" value="1"/>
</dbReference>
<dbReference type="PANTHER" id="PTHR46896:SF2">
    <property type="entry name" value="SENTRIN-SPECIFIC PROTEASE 7"/>
    <property type="match status" value="1"/>
</dbReference>
<dbReference type="Pfam" id="PF02902">
    <property type="entry name" value="Peptidase_C48"/>
    <property type="match status" value="1"/>
</dbReference>
<dbReference type="SUPFAM" id="SSF54001">
    <property type="entry name" value="Cysteine proteinases"/>
    <property type="match status" value="1"/>
</dbReference>
<dbReference type="PROSITE" id="PS50600">
    <property type="entry name" value="ULP_PROTEASE"/>
    <property type="match status" value="1"/>
</dbReference>
<protein>
    <recommendedName>
        <fullName evidence="8">Sentrin-specific protease 7</fullName>
        <ecNumber evidence="5">3.4.22.-</ecNumber>
    </recommendedName>
    <alternativeName>
        <fullName>SUMO-1-specific protease 2</fullName>
    </alternativeName>
    <alternativeName>
        <fullName>Sentrin/SUMO-specific protease SENP7</fullName>
    </alternativeName>
</protein>
<accession>Q8BUH8</accession>
<accession>Q6P398</accession>
<accession>Q80TA3</accession>
<gene>
    <name evidence="7 10" type="primary">Senp7</name>
    <name evidence="6" type="synonym">Kiaa1707</name>
    <name type="synonym">Susp2</name>
</gene>